<gene>
    <name evidence="6" type="primary">gltR</name>
    <name evidence="9" type="ordered locus">PA3192</name>
</gene>
<protein>
    <recommendedName>
        <fullName evidence="7">Transcriptional regulatory protein GltR</fullName>
    </recommendedName>
</protein>
<name>GLTR_PSEAE</name>
<reference key="1">
    <citation type="journal article" date="1996" name="J. Bacteriol.">
        <title>A two-component response regulator, gltR, is required for glucose transport activity in Pseudomonas aeruginosa PAO1.</title>
        <authorList>
            <person name="Sage A.E."/>
            <person name="Proctor W.D."/>
            <person name="Phibbs P.V. Jr."/>
        </authorList>
    </citation>
    <scope>NUCLEOTIDE SEQUENCE [GENOMIC DNA]</scope>
    <scope>FUNCTION</scope>
    <scope>DISRUPTION PHENOTYPE</scope>
    <source>
        <strain>ATCC 15692 / DSM 22644 / CIP 104116 / JCM 14847 / LMG 12228 / 1C / PRS 101 / PAO1</strain>
    </source>
</reference>
<reference key="2">
    <citation type="journal article" date="2000" name="Nature">
        <title>Complete genome sequence of Pseudomonas aeruginosa PAO1, an opportunistic pathogen.</title>
        <authorList>
            <person name="Stover C.K."/>
            <person name="Pham X.-Q.T."/>
            <person name="Erwin A.L."/>
            <person name="Mizoguchi S.D."/>
            <person name="Warrener P."/>
            <person name="Hickey M.J."/>
            <person name="Brinkman F.S.L."/>
            <person name="Hufnagle W.O."/>
            <person name="Kowalik D.J."/>
            <person name="Lagrou M."/>
            <person name="Garber R.L."/>
            <person name="Goltry L."/>
            <person name="Tolentino E."/>
            <person name="Westbrock-Wadman S."/>
            <person name="Yuan Y."/>
            <person name="Brody L.L."/>
            <person name="Coulter S.N."/>
            <person name="Folger K.R."/>
            <person name="Kas A."/>
            <person name="Larbig K."/>
            <person name="Lim R.M."/>
            <person name="Smith K.A."/>
            <person name="Spencer D.H."/>
            <person name="Wong G.K.-S."/>
            <person name="Wu Z."/>
            <person name="Paulsen I.T."/>
            <person name="Reizer J."/>
            <person name="Saier M.H. Jr."/>
            <person name="Hancock R.E.W."/>
            <person name="Lory S."/>
            <person name="Olson M.V."/>
        </authorList>
    </citation>
    <scope>NUCLEOTIDE SEQUENCE [LARGE SCALE GENOMIC DNA]</scope>
    <source>
        <strain>ATCC 15692 / DSM 22644 / CIP 104116 / JCM 14847 / LMG 12228 / 1C / PRS 101 / PAO1</strain>
    </source>
</reference>
<reference key="3">
    <citation type="journal article" date="2012" name="Microbiology">
        <title>A novel host-responsive sensor mediates virulence and type III secretion during Pseudomonas aeruginosa-host cell interactions.</title>
        <authorList>
            <person name="O'Callaghan J."/>
            <person name="Reen F.J."/>
            <person name="Adams C."/>
            <person name="Casey P.G."/>
            <person name="Gahan C.G.M."/>
            <person name="O'Gara F."/>
        </authorList>
    </citation>
    <scope>FUNCTION</scope>
    <scope>DISRUPTION PHENOTYPE</scope>
    <source>
        <strain>ATCC 15692 / DSM 22644 / CIP 104116 / JCM 14847 / LMG 12228 / 1C / PRS 101 / PAO1</strain>
    </source>
</reference>
<reference key="4">
    <citation type="journal article" date="2014" name="Nucleic Acids Res.">
        <title>GtrS and GltR form a two-component system: the central role of 2-ketogluconate in the expression of exotoxin A and glucose catabolic enzymes in Pseudomonas aeruginosa.</title>
        <authorList>
            <person name="Daddaoua A."/>
            <person name="Molina-Santiago C."/>
            <person name="de la Torre J."/>
            <person name="Krell T."/>
            <person name="Ramos J.L."/>
        </authorList>
    </citation>
    <scope>FUNCTION</scope>
    <scope>DNA-BINDING</scope>
    <scope>ACTIVITY REGULATION</scope>
    <scope>PROBABLE PHOSPHORYLATION AT ASP-56</scope>
    <scope>MUTAGENESIS OF ASP-56</scope>
    <source>
        <strain>ATCC 15692 / DSM 22644 / CIP 104116 / JCM 14847 / LMG 12228 / 1C / PRS 101 / PAO1</strain>
    </source>
</reference>
<sequence>MSANGRSILLVDDDQEIRELLETYLSRAGFQVRSVSRGADFRQALCEEEASLAILDVMLPDEDGFSLCRWIRSHQRLACMPIIMLTASSDEADRVIGLELGADDYLGKPFSPRELLARIKALLRRAQFTQVRGGDVLAFEDWRLDTVSHRLFHEDGEEFFLSGADFALLKLFLDHPQQILDRDTIANATRGREVLPLERIVDMAVSRLRQRLRDTGKAPRLIQTVRGSGYLLAAQVRPHLQP</sequence>
<comment type="function">
    <text evidence="4 5">Member of the two-component regulatory system GtrS/GltR involved in the regulation of glucose metabolism and transport, as well as regulation of the exotoxin A gene expression (PubMed:24920832). GltR controls the transcription of genes involved in glucose metabolism (glk and edd/gap-1) and transport (oprB) as well as the expression of toxA that encodes exotoxin A, the primary virulence factor (PubMed:24920832, PubMed:8830708). Acts as a repressor that is released from its target operators upon phosphorylation (PubMed:24920832).</text>
</comment>
<comment type="function">
    <text evidence="3">Contributes to modulation of the type III secretion system (T3SS) in response to host cells via the regulation of the OprB transport system.</text>
</comment>
<comment type="activity regulation">
    <text evidence="4">Phosphorylation of GltR induces its dissociation from DNA leading to transcriptional activation.</text>
</comment>
<comment type="subcellular location">
    <subcellularLocation>
        <location evidence="7">Cytoplasm</location>
    </subcellularLocation>
</comment>
<comment type="PTM">
    <text evidence="4">Phosphorylated by GtrS.</text>
</comment>
<comment type="disruption phenotype">
    <text evidence="3 5">Disruption of the gene causes loss of glucose transport activity (PubMed:8830708). Inactivation results in elevated ingestion and reduced cytotoxicity of eukaryotic cells during P.aeruginosa infection (PubMed:22262100).</text>
</comment>
<organism>
    <name type="scientific">Pseudomonas aeruginosa (strain ATCC 15692 / DSM 22644 / CIP 104116 / JCM 14847 / LMG 12228 / 1C / PRS 101 / PAO1)</name>
    <dbReference type="NCBI Taxonomy" id="208964"/>
    <lineage>
        <taxon>Bacteria</taxon>
        <taxon>Pseudomonadati</taxon>
        <taxon>Pseudomonadota</taxon>
        <taxon>Gammaproteobacteria</taxon>
        <taxon>Pseudomonadales</taxon>
        <taxon>Pseudomonadaceae</taxon>
        <taxon>Pseudomonas</taxon>
    </lineage>
</organism>
<feature type="chain" id="PRO_0000454757" description="Transcriptional regulatory protein GltR">
    <location>
        <begin position="1"/>
        <end position="242"/>
    </location>
</feature>
<feature type="domain" description="Response regulatory" evidence="1">
    <location>
        <begin position="7"/>
        <end position="123"/>
    </location>
</feature>
<feature type="DNA-binding region" description="OmpR/PhoB-type" evidence="2">
    <location>
        <begin position="134"/>
        <end position="234"/>
    </location>
</feature>
<feature type="modified residue" description="4-aspartylphosphate" evidence="1 8">
    <location>
        <position position="56"/>
    </location>
</feature>
<feature type="mutagenesis site" description="Cannot dissociate from DNA." evidence="4">
    <original>D</original>
    <variation>A</variation>
    <location>
        <position position="56"/>
    </location>
</feature>
<proteinExistence type="evidence at protein level"/>
<dbReference type="EMBL" id="U50932">
    <property type="protein sequence ID" value="AAC44475.1"/>
    <property type="molecule type" value="Genomic_DNA"/>
</dbReference>
<dbReference type="EMBL" id="AE004091">
    <property type="protein sequence ID" value="AAG06580.1"/>
    <property type="molecule type" value="Genomic_DNA"/>
</dbReference>
<dbReference type="PIR" id="E83246">
    <property type="entry name" value="E83246"/>
</dbReference>
<dbReference type="RefSeq" id="NP_251882.1">
    <property type="nucleotide sequence ID" value="NC_002516.2"/>
</dbReference>
<dbReference type="RefSeq" id="WP_003091475.1">
    <property type="nucleotide sequence ID" value="NZ_QZGE01000019.1"/>
</dbReference>
<dbReference type="SMR" id="G3XCY6"/>
<dbReference type="STRING" id="208964.PA3192"/>
<dbReference type="PaxDb" id="208964-PA3192"/>
<dbReference type="GeneID" id="882907"/>
<dbReference type="KEGG" id="pae:PA3192"/>
<dbReference type="PATRIC" id="fig|208964.12.peg.3338"/>
<dbReference type="PseudoCAP" id="PA3192"/>
<dbReference type="HOGENOM" id="CLU_000445_30_4_6"/>
<dbReference type="InParanoid" id="G3XCY6"/>
<dbReference type="OrthoDB" id="9802426at2"/>
<dbReference type="PhylomeDB" id="G3XCY6"/>
<dbReference type="Proteomes" id="UP000002438">
    <property type="component" value="Chromosome"/>
</dbReference>
<dbReference type="GO" id="GO:0005829">
    <property type="term" value="C:cytosol"/>
    <property type="evidence" value="ECO:0000318"/>
    <property type="project" value="GO_Central"/>
</dbReference>
<dbReference type="GO" id="GO:0032993">
    <property type="term" value="C:protein-DNA complex"/>
    <property type="evidence" value="ECO:0000318"/>
    <property type="project" value="GO_Central"/>
</dbReference>
<dbReference type="GO" id="GO:0000156">
    <property type="term" value="F:phosphorelay response regulator activity"/>
    <property type="evidence" value="ECO:0000318"/>
    <property type="project" value="GO_Central"/>
</dbReference>
<dbReference type="GO" id="GO:0000976">
    <property type="term" value="F:transcription cis-regulatory region binding"/>
    <property type="evidence" value="ECO:0000318"/>
    <property type="project" value="GO_Central"/>
</dbReference>
<dbReference type="GO" id="GO:0010828">
    <property type="term" value="P:positive regulation of D-glucose transmembrane transport"/>
    <property type="evidence" value="ECO:0000315"/>
    <property type="project" value="PseudoCAP"/>
</dbReference>
<dbReference type="GO" id="GO:0006355">
    <property type="term" value="P:regulation of DNA-templated transcription"/>
    <property type="evidence" value="ECO:0000318"/>
    <property type="project" value="GO_Central"/>
</dbReference>
<dbReference type="CDD" id="cd00383">
    <property type="entry name" value="trans_reg_C"/>
    <property type="match status" value="1"/>
</dbReference>
<dbReference type="FunFam" id="3.40.50.2300:FF:000001">
    <property type="entry name" value="DNA-binding response regulator PhoB"/>
    <property type="match status" value="1"/>
</dbReference>
<dbReference type="FunFam" id="1.10.10.10:FF:000099">
    <property type="entry name" value="Two-component system response regulator TorR"/>
    <property type="match status" value="1"/>
</dbReference>
<dbReference type="Gene3D" id="3.40.50.2300">
    <property type="match status" value="1"/>
</dbReference>
<dbReference type="Gene3D" id="6.10.250.690">
    <property type="match status" value="1"/>
</dbReference>
<dbReference type="Gene3D" id="1.10.10.10">
    <property type="entry name" value="Winged helix-like DNA-binding domain superfamily/Winged helix DNA-binding domain"/>
    <property type="match status" value="1"/>
</dbReference>
<dbReference type="InterPro" id="IPR011006">
    <property type="entry name" value="CheY-like_superfamily"/>
</dbReference>
<dbReference type="InterPro" id="IPR001867">
    <property type="entry name" value="OmpR/PhoB-type_DNA-bd"/>
</dbReference>
<dbReference type="InterPro" id="IPR016032">
    <property type="entry name" value="Sig_transdc_resp-reg_C-effctor"/>
</dbReference>
<dbReference type="InterPro" id="IPR001789">
    <property type="entry name" value="Sig_transdc_resp-reg_receiver"/>
</dbReference>
<dbReference type="InterPro" id="IPR039420">
    <property type="entry name" value="WalR-like"/>
</dbReference>
<dbReference type="InterPro" id="IPR036388">
    <property type="entry name" value="WH-like_DNA-bd_sf"/>
</dbReference>
<dbReference type="PANTHER" id="PTHR48111:SF4">
    <property type="entry name" value="DNA-BINDING DUAL TRANSCRIPTIONAL REGULATOR OMPR"/>
    <property type="match status" value="1"/>
</dbReference>
<dbReference type="PANTHER" id="PTHR48111">
    <property type="entry name" value="REGULATOR OF RPOS"/>
    <property type="match status" value="1"/>
</dbReference>
<dbReference type="Pfam" id="PF00072">
    <property type="entry name" value="Response_reg"/>
    <property type="match status" value="1"/>
</dbReference>
<dbReference type="Pfam" id="PF00486">
    <property type="entry name" value="Trans_reg_C"/>
    <property type="match status" value="1"/>
</dbReference>
<dbReference type="SMART" id="SM00448">
    <property type="entry name" value="REC"/>
    <property type="match status" value="1"/>
</dbReference>
<dbReference type="SMART" id="SM00862">
    <property type="entry name" value="Trans_reg_C"/>
    <property type="match status" value="1"/>
</dbReference>
<dbReference type="SUPFAM" id="SSF46894">
    <property type="entry name" value="C-terminal effector domain of the bipartite response regulators"/>
    <property type="match status" value="1"/>
</dbReference>
<dbReference type="SUPFAM" id="SSF52172">
    <property type="entry name" value="CheY-like"/>
    <property type="match status" value="1"/>
</dbReference>
<dbReference type="PROSITE" id="PS51755">
    <property type="entry name" value="OMPR_PHOB"/>
    <property type="match status" value="1"/>
</dbReference>
<dbReference type="PROSITE" id="PS50110">
    <property type="entry name" value="RESPONSE_REGULATORY"/>
    <property type="match status" value="1"/>
</dbReference>
<keyword id="KW-0963">Cytoplasm</keyword>
<keyword id="KW-0238">DNA-binding</keyword>
<keyword id="KW-0597">Phosphoprotein</keyword>
<keyword id="KW-1185">Reference proteome</keyword>
<keyword id="KW-0678">Repressor</keyword>
<keyword id="KW-0804">Transcription</keyword>
<keyword id="KW-0805">Transcription regulation</keyword>
<keyword id="KW-0902">Two-component regulatory system</keyword>
<accession>G3XCY6</accession>
<evidence type="ECO:0000255" key="1">
    <source>
        <dbReference type="PROSITE-ProRule" id="PRU00169"/>
    </source>
</evidence>
<evidence type="ECO:0000255" key="2">
    <source>
        <dbReference type="PROSITE-ProRule" id="PRU01091"/>
    </source>
</evidence>
<evidence type="ECO:0000269" key="3">
    <source>
    </source>
</evidence>
<evidence type="ECO:0000269" key="4">
    <source>
    </source>
</evidence>
<evidence type="ECO:0000269" key="5">
    <source>
    </source>
</evidence>
<evidence type="ECO:0000303" key="6">
    <source>
    </source>
</evidence>
<evidence type="ECO:0000305" key="7"/>
<evidence type="ECO:0000305" key="8">
    <source>
    </source>
</evidence>
<evidence type="ECO:0000312" key="9">
    <source>
        <dbReference type="EMBL" id="AAG06580.1"/>
    </source>
</evidence>